<name>PSBN_THEVB</name>
<organism>
    <name type="scientific">Thermosynechococcus vestitus (strain NIES-2133 / IAM M-273 / BP-1)</name>
    <dbReference type="NCBI Taxonomy" id="197221"/>
    <lineage>
        <taxon>Bacteria</taxon>
        <taxon>Bacillati</taxon>
        <taxon>Cyanobacteriota</taxon>
        <taxon>Cyanophyceae</taxon>
        <taxon>Acaryochloridales</taxon>
        <taxon>Thermosynechococcaceae</taxon>
        <taxon>Thermosynechococcus</taxon>
    </lineage>
</organism>
<proteinExistence type="inferred from homology"/>
<dbReference type="EMBL" id="BA000039">
    <property type="protein sequence ID" value="BAC08939.1"/>
    <property type="molecule type" value="Genomic_DNA"/>
</dbReference>
<dbReference type="RefSeq" id="NP_682177.1">
    <property type="nucleotide sequence ID" value="NC_004113.1"/>
</dbReference>
<dbReference type="RefSeq" id="WP_011057227.1">
    <property type="nucleotide sequence ID" value="NC_004113.1"/>
</dbReference>
<dbReference type="SMR" id="Q8DJ42"/>
<dbReference type="STRING" id="197221.gene:10747985"/>
<dbReference type="EnsemblBacteria" id="BAC08939">
    <property type="protein sequence ID" value="BAC08939"/>
    <property type="gene ID" value="BAC08939"/>
</dbReference>
<dbReference type="KEGG" id="tel:tsr1387"/>
<dbReference type="PATRIC" id="fig|197221.4.peg.1459"/>
<dbReference type="eggNOG" id="ENOG50339MH">
    <property type="taxonomic scope" value="Bacteria"/>
</dbReference>
<dbReference type="Proteomes" id="UP000000440">
    <property type="component" value="Chromosome"/>
</dbReference>
<dbReference type="GO" id="GO:0031676">
    <property type="term" value="C:plasma membrane-derived thylakoid membrane"/>
    <property type="evidence" value="ECO:0007669"/>
    <property type="project" value="UniProtKB-SubCell"/>
</dbReference>
<dbReference type="GO" id="GO:0015979">
    <property type="term" value="P:photosynthesis"/>
    <property type="evidence" value="ECO:0007669"/>
    <property type="project" value="InterPro"/>
</dbReference>
<dbReference type="HAMAP" id="MF_00293">
    <property type="entry name" value="PSII_PsbN"/>
    <property type="match status" value="1"/>
</dbReference>
<dbReference type="InterPro" id="IPR003398">
    <property type="entry name" value="PSII_PsbN"/>
</dbReference>
<dbReference type="NCBIfam" id="NF009650">
    <property type="entry name" value="PRK13183.1"/>
    <property type="match status" value="1"/>
</dbReference>
<dbReference type="PANTHER" id="PTHR35326">
    <property type="entry name" value="PROTEIN PSBN"/>
    <property type="match status" value="1"/>
</dbReference>
<dbReference type="PANTHER" id="PTHR35326:SF3">
    <property type="entry name" value="PROTEIN PSBN"/>
    <property type="match status" value="1"/>
</dbReference>
<dbReference type="Pfam" id="PF02468">
    <property type="entry name" value="PsbN"/>
    <property type="match status" value="1"/>
</dbReference>
<comment type="function">
    <text evidence="1">May play a role in photosystem I and II biogenesis.</text>
</comment>
<comment type="subcellular location">
    <subcellularLocation>
        <location evidence="1">Cellular thylakoid membrane</location>
        <topology evidence="1">Single-pass membrane protein</topology>
    </subcellularLocation>
</comment>
<comment type="similarity">
    <text evidence="1">Belongs to the PsbN family.</text>
</comment>
<comment type="caution">
    <text evidence="1 2">Originally thought to be a component of PSII; based on experiments in Synechocystis, N.tabacum and barley, and its absence from PSII in this organism and T.vulcanus, this is probably not true.</text>
</comment>
<reference key="1">
    <citation type="journal article" date="2002" name="DNA Res.">
        <title>Complete genome structure of the thermophilic cyanobacterium Thermosynechococcus elongatus BP-1.</title>
        <authorList>
            <person name="Nakamura Y."/>
            <person name="Kaneko T."/>
            <person name="Sato S."/>
            <person name="Ikeuchi M."/>
            <person name="Katoh H."/>
            <person name="Sasamoto S."/>
            <person name="Watanabe A."/>
            <person name="Iriguchi M."/>
            <person name="Kawashima K."/>
            <person name="Kimura T."/>
            <person name="Kishida Y."/>
            <person name="Kiyokawa C."/>
            <person name="Kohara M."/>
            <person name="Matsumoto M."/>
            <person name="Matsuno A."/>
            <person name="Nakazaki N."/>
            <person name="Shimpo S."/>
            <person name="Sugimoto M."/>
            <person name="Takeuchi C."/>
            <person name="Yamada M."/>
            <person name="Tabata S."/>
        </authorList>
    </citation>
    <scope>NUCLEOTIDE SEQUENCE [LARGE SCALE GENOMIC DNA]</scope>
    <source>
        <strain>NIES-2133 / IAM M-273 / BP-1</strain>
    </source>
</reference>
<reference key="2">
    <citation type="journal article" date="2009" name="Nat. Struct. Mol. Biol.">
        <title>Cyanobacterial photosystem II at 2.9-A resolution and the role of quinones, lipids, channels and chloride.</title>
        <authorList>
            <person name="Guskov A."/>
            <person name="Kern J."/>
            <person name="Gabdulkhakov A."/>
            <person name="Broser M."/>
            <person name="Zouni A."/>
            <person name="Saenger W."/>
        </authorList>
    </citation>
    <scope>ABSENCE FROM PHOTOSYSTEM II</scope>
    <source>
        <strain>NIES-2133 / IAM M-273 / BP-1</strain>
    </source>
</reference>
<keyword id="KW-0472">Membrane</keyword>
<keyword id="KW-1185">Reference proteome</keyword>
<keyword id="KW-0793">Thylakoid</keyword>
<keyword id="KW-0812">Transmembrane</keyword>
<keyword id="KW-1133">Transmembrane helix</keyword>
<sequence length="43" mass="4541">MEPATVLSIALAAVCIGVTGYSIYLSFGPPSKELADPFDDHED</sequence>
<protein>
    <recommendedName>
        <fullName evidence="1">Protein PsbN</fullName>
    </recommendedName>
</protein>
<gene>
    <name evidence="1" type="primary">psbN</name>
    <name type="ordered locus">tsr1387</name>
</gene>
<evidence type="ECO:0000255" key="1">
    <source>
        <dbReference type="HAMAP-Rule" id="MF_00293"/>
    </source>
</evidence>
<evidence type="ECO:0000269" key="2">
    <source>
    </source>
</evidence>
<feature type="chain" id="PRO_0000207974" description="Protein PsbN">
    <location>
        <begin position="1"/>
        <end position="43"/>
    </location>
</feature>
<feature type="transmembrane region" description="Helical" evidence="1">
    <location>
        <begin position="7"/>
        <end position="29"/>
    </location>
</feature>
<accession>Q8DJ42</accession>